<proteinExistence type="evidence at protein level"/>
<dbReference type="EMBL" id="AY217760">
    <property type="protein sequence ID" value="AAO60215.1"/>
    <property type="molecule type" value="mRNA"/>
</dbReference>
<dbReference type="RefSeq" id="NP_001007553.1">
    <property type="nucleotide sequence ID" value="NM_001007552.1"/>
</dbReference>
<dbReference type="SMR" id="Q80ZA0"/>
<dbReference type="FunCoup" id="Q80ZA0">
    <property type="interactions" value="419"/>
</dbReference>
<dbReference type="GlyCosmos" id="Q80ZA0">
    <property type="glycosylation" value="1 site, No reported glycans"/>
</dbReference>
<dbReference type="GlyGen" id="Q80ZA0">
    <property type="glycosylation" value="1 site"/>
</dbReference>
<dbReference type="GeneID" id="493583"/>
<dbReference type="KEGG" id="mmu:493583"/>
<dbReference type="AGR" id="MGI:3057189"/>
<dbReference type="CTD" id="493583"/>
<dbReference type="MGI" id="MGI:3057189">
    <property type="gene designation" value="Itlnb"/>
</dbReference>
<dbReference type="InParanoid" id="Q80ZA0"/>
<dbReference type="PRO" id="PR:Q80ZA0"/>
<dbReference type="Proteomes" id="UP000000589">
    <property type="component" value="Unplaced"/>
</dbReference>
<dbReference type="RNAct" id="Q80ZA0">
    <property type="molecule type" value="protein"/>
</dbReference>
<dbReference type="GO" id="GO:0005615">
    <property type="term" value="C:extracellular space"/>
    <property type="evidence" value="ECO:0000314"/>
    <property type="project" value="MGI"/>
</dbReference>
<dbReference type="GO" id="GO:0005886">
    <property type="term" value="C:plasma membrane"/>
    <property type="evidence" value="ECO:0007669"/>
    <property type="project" value="UniProtKB-SubCell"/>
</dbReference>
<dbReference type="GO" id="GO:0098552">
    <property type="term" value="C:side of membrane"/>
    <property type="evidence" value="ECO:0007669"/>
    <property type="project" value="UniProtKB-KW"/>
</dbReference>
<dbReference type="GO" id="GO:0030246">
    <property type="term" value="F:carbohydrate binding"/>
    <property type="evidence" value="ECO:0007669"/>
    <property type="project" value="UniProtKB-KW"/>
</dbReference>
<dbReference type="GO" id="GO:0046872">
    <property type="term" value="F:metal ion binding"/>
    <property type="evidence" value="ECO:0007669"/>
    <property type="project" value="UniProtKB-KW"/>
</dbReference>
<dbReference type="GO" id="GO:0002215">
    <property type="term" value="P:defense response to nematode"/>
    <property type="evidence" value="ECO:0000315"/>
    <property type="project" value="MGI"/>
</dbReference>
<dbReference type="GO" id="GO:0009624">
    <property type="term" value="P:response to nematode"/>
    <property type="evidence" value="ECO:0000314"/>
    <property type="project" value="UniProtKB"/>
</dbReference>
<dbReference type="FunFam" id="3.90.215.10:FF:000011">
    <property type="entry name" value="Intelectin 1"/>
    <property type="match status" value="1"/>
</dbReference>
<dbReference type="Gene3D" id="3.90.215.10">
    <property type="entry name" value="Gamma Fibrinogen, chain A, domain 1"/>
    <property type="match status" value="1"/>
</dbReference>
<dbReference type="InterPro" id="IPR036056">
    <property type="entry name" value="Fibrinogen-like_C"/>
</dbReference>
<dbReference type="InterPro" id="IPR014716">
    <property type="entry name" value="Fibrinogen_a/b/g_C_1"/>
</dbReference>
<dbReference type="InterPro" id="IPR002181">
    <property type="entry name" value="Fibrinogen_a/b/g_C_dom"/>
</dbReference>
<dbReference type="NCBIfam" id="NF040941">
    <property type="entry name" value="GGGWT_bact"/>
    <property type="match status" value="1"/>
</dbReference>
<dbReference type="PANTHER" id="PTHR16146">
    <property type="entry name" value="INTELECTIN"/>
    <property type="match status" value="1"/>
</dbReference>
<dbReference type="PANTHER" id="PTHR16146:SF46">
    <property type="entry name" value="INTELECTIN-1A-RELATED"/>
    <property type="match status" value="1"/>
</dbReference>
<dbReference type="Pfam" id="PF00147">
    <property type="entry name" value="Fibrinogen_C"/>
    <property type="match status" value="1"/>
</dbReference>
<dbReference type="SUPFAM" id="SSF56496">
    <property type="entry name" value="Fibrinogen C-terminal domain-like"/>
    <property type="match status" value="1"/>
</dbReference>
<dbReference type="PROSITE" id="PS51406">
    <property type="entry name" value="FIBRINOGEN_C_2"/>
    <property type="match status" value="1"/>
</dbReference>
<evidence type="ECO:0000250" key="1">
    <source>
        <dbReference type="UniProtKB" id="Q5PPM0"/>
    </source>
</evidence>
<evidence type="ECO:0000250" key="2">
    <source>
        <dbReference type="UniProtKB" id="Q8WWA0"/>
    </source>
</evidence>
<evidence type="ECO:0000255" key="3"/>
<evidence type="ECO:0000255" key="4">
    <source>
        <dbReference type="PROSITE-ProRule" id="PRU00739"/>
    </source>
</evidence>
<evidence type="ECO:0000269" key="5">
    <source>
    </source>
</evidence>
<evidence type="ECO:0000269" key="6">
    <source>
    </source>
</evidence>
<evidence type="ECO:0000269" key="7">
    <source>
    </source>
</evidence>
<evidence type="ECO:0000305" key="8"/>
<reference key="1">
    <citation type="journal article" date="2004" name="J. Immunol.">
        <title>Innate BALB/c enteric epithelial responses to Trichinella spiralis: inducible expression of a novel goblet cell lectin, intelectin-2, and its natural deletion in C57BL/10 mice.</title>
        <authorList>
            <person name="Pemberton A.D."/>
            <person name="Knight P.A."/>
            <person name="Gamble J."/>
            <person name="Colledge W.H."/>
            <person name="Lee J.K."/>
            <person name="Pierce M."/>
            <person name="Miller H.R."/>
        </authorList>
    </citation>
    <scope>NUCLEOTIDE SEQUENCE [MRNA]</scope>
    <scope>INDUCTION</scope>
    <source>
        <strain>BALB/cJ</strain>
        <tissue>Intestine</tissue>
    </source>
</reference>
<reference key="2">
    <citation type="journal article" date="2004" name="Proteomics">
        <title>Proteomic analysis of mouse jejunal epithelium and its response to infection with the intestinal nematode, Trichinella spiralis.</title>
        <authorList>
            <person name="Pemberton A.D."/>
            <person name="Knight P.A."/>
            <person name="Wright S.H."/>
            <person name="Miller H.R."/>
        </authorList>
    </citation>
    <scope>INDUCTION</scope>
</reference>
<reference key="3">
    <citation type="journal article" date="2007" name="Exp. Parasitol.">
        <title>Nippostrongylus brasiliensis: identification of intelectin-1 and -2 as Stat6-dependent genes expressed in lung and intestine during infection.</title>
        <authorList>
            <person name="Voehringer D."/>
            <person name="Stanley S.A."/>
            <person name="Cox J.S."/>
            <person name="Completo G.C."/>
            <person name="Lowary T.L."/>
            <person name="Locksley R.M."/>
        </authorList>
    </citation>
    <scope>INDUCTION</scope>
</reference>
<organism>
    <name type="scientific">Mus musculus</name>
    <name type="common">Mouse</name>
    <dbReference type="NCBI Taxonomy" id="10090"/>
    <lineage>
        <taxon>Eukaryota</taxon>
        <taxon>Metazoa</taxon>
        <taxon>Chordata</taxon>
        <taxon>Craniata</taxon>
        <taxon>Vertebrata</taxon>
        <taxon>Euteleostomi</taxon>
        <taxon>Mammalia</taxon>
        <taxon>Eutheria</taxon>
        <taxon>Euarchontoglires</taxon>
        <taxon>Glires</taxon>
        <taxon>Rodentia</taxon>
        <taxon>Myomorpha</taxon>
        <taxon>Muroidea</taxon>
        <taxon>Muridae</taxon>
        <taxon>Murinae</taxon>
        <taxon>Mus</taxon>
        <taxon>Mus</taxon>
    </lineage>
</organism>
<feature type="signal peptide" evidence="3">
    <location>
        <begin position="1"/>
        <end position="19"/>
    </location>
</feature>
<feature type="chain" id="PRO_0000009147" description="Intelectin-1b">
    <location>
        <begin position="20"/>
        <end position="298"/>
    </location>
</feature>
<feature type="propeptide" id="PRO_0000009148" evidence="3">
    <location>
        <begin position="299"/>
        <end position="313"/>
    </location>
</feature>
<feature type="domain" description="Fibrinogen C-terminal" evidence="4">
    <location>
        <begin position="32"/>
        <end position="251"/>
    </location>
</feature>
<feature type="binding site" evidence="2">
    <location>
        <position position="86"/>
    </location>
    <ligand>
        <name>Ca(2+)</name>
        <dbReference type="ChEBI" id="CHEBI:29108"/>
        <label>1</label>
    </ligand>
</feature>
<feature type="binding site" evidence="2">
    <location>
        <position position="87"/>
    </location>
    <ligand>
        <name>Ca(2+)</name>
        <dbReference type="ChEBI" id="CHEBI:29108"/>
        <label>2</label>
    </ligand>
</feature>
<feature type="binding site" evidence="1">
    <location>
        <position position="89"/>
    </location>
    <ligand>
        <name>Ca(2+)</name>
        <dbReference type="ChEBI" id="CHEBI:29108"/>
        <label>2</label>
    </ligand>
</feature>
<feature type="binding site" evidence="2">
    <location>
        <position position="92"/>
    </location>
    <ligand>
        <name>Ca(2+)</name>
        <dbReference type="ChEBI" id="CHEBI:29108"/>
        <label>2</label>
    </ligand>
</feature>
<feature type="binding site" evidence="2">
    <location>
        <position position="97"/>
    </location>
    <ligand>
        <name>Ca(2+)</name>
        <dbReference type="ChEBI" id="CHEBI:29108"/>
        <label>1</label>
    </ligand>
</feature>
<feature type="binding site" evidence="2">
    <location>
        <position position="98"/>
    </location>
    <ligand>
        <name>Ca(2+)</name>
        <dbReference type="ChEBI" id="CHEBI:29108"/>
        <label>2</label>
    </ligand>
</feature>
<feature type="binding site" evidence="2">
    <location>
        <position position="133"/>
    </location>
    <ligand>
        <name>Ca(2+)</name>
        <dbReference type="ChEBI" id="CHEBI:29108"/>
        <label>1</label>
    </ligand>
</feature>
<feature type="binding site" evidence="2">
    <location>
        <position position="260"/>
    </location>
    <ligand>
        <name>Ca(2+)</name>
        <dbReference type="ChEBI" id="CHEBI:29108"/>
        <label>3</label>
    </ligand>
</feature>
<feature type="binding site" evidence="2">
    <location>
        <begin position="262"/>
        <end position="263"/>
    </location>
    <ligand>
        <name>a carbohydrate</name>
        <dbReference type="ChEBI" id="CHEBI:16646"/>
    </ligand>
</feature>
<feature type="binding site" evidence="2">
    <location>
        <position position="262"/>
    </location>
    <ligand>
        <name>Ca(2+)</name>
        <dbReference type="ChEBI" id="CHEBI:29108"/>
        <label>3</label>
    </ligand>
</feature>
<feature type="binding site" evidence="2">
    <location>
        <position position="274"/>
    </location>
    <ligand>
        <name>a carbohydrate</name>
        <dbReference type="ChEBI" id="CHEBI:16646"/>
    </ligand>
</feature>
<feature type="binding site" evidence="2">
    <location>
        <position position="274"/>
    </location>
    <ligand>
        <name>Ca(2+)</name>
        <dbReference type="ChEBI" id="CHEBI:29108"/>
        <label>3</label>
    </ligand>
</feature>
<feature type="binding site" evidence="2">
    <location>
        <position position="282"/>
    </location>
    <ligand>
        <name>Ca(2+)</name>
        <dbReference type="ChEBI" id="CHEBI:29108"/>
        <label>1</label>
    </ligand>
</feature>
<feature type="lipid moiety-binding region" description="GPI-anchor amidated serine" evidence="3">
    <location>
        <position position="298"/>
    </location>
</feature>
<feature type="glycosylation site" description="N-linked (GlcNAc...) asparagine" evidence="3">
    <location>
        <position position="163"/>
    </location>
</feature>
<feature type="disulfide bond" evidence="2">
    <location>
        <begin position="41"/>
        <end position="70"/>
    </location>
</feature>
<feature type="disulfide bond" evidence="2">
    <location>
        <begin position="94"/>
        <end position="280"/>
    </location>
</feature>
<feature type="disulfide bond" evidence="2">
    <location>
        <begin position="199"/>
        <end position="259"/>
    </location>
</feature>
<feature type="disulfide bond" evidence="2">
    <location>
        <begin position="251"/>
        <end position="265"/>
    </location>
</feature>
<keyword id="KW-0106">Calcium</keyword>
<keyword id="KW-1003">Cell membrane</keyword>
<keyword id="KW-1015">Disulfide bond</keyword>
<keyword id="KW-0325">Glycoprotein</keyword>
<keyword id="KW-0336">GPI-anchor</keyword>
<keyword id="KW-0430">Lectin</keyword>
<keyword id="KW-0449">Lipoprotein</keyword>
<keyword id="KW-0472">Membrane</keyword>
<keyword id="KW-0479">Metal-binding</keyword>
<keyword id="KW-1185">Reference proteome</keyword>
<keyword id="KW-0964">Secreted</keyword>
<keyword id="KW-0732">Signal</keyword>
<accession>Q80ZA0</accession>
<gene>
    <name type="primary">Itln1b</name>
    <name type="synonym">Itln2</name>
    <name type="synonym">Itlnb</name>
</gene>
<sequence>MTQLGFLLFIMIATRVCSAAEENLDTNRWGNSFFSSLPRSCKEIKQEDTKAQDGLYFLRTENGVIYQTFCDMTTAGGGWTLVASVHENNLRGRCTVGDRWSSQQGNRADYPEGDGNWANYNTFGSAEGATSDDYKNPGYFDIQAENLGIWHVPNNSPLHTWRNSSLLRYRTFTGFLQRLGHNLFGLYQKYPVKYGEGKCWTDNGPAFPVVYDFGDAQKTASYYSPSGRNEFTAGYVQFRVFNNERAASALCAGVRVTGCNTEHHCIGGGGFFPEFDPEECGDFAAFDANGYGTHIRYSNSREITEAAVLLFYR</sequence>
<name>ITL1B_MOUSE</name>
<comment type="function">
    <text evidence="8">May play a protective role in the innate immune response to parasite infection.</text>
</comment>
<comment type="subcellular location">
    <subcellularLocation>
        <location evidence="2">Cell membrane</location>
        <topology evidence="2">Lipid-anchor</topology>
        <topology evidence="2">GPI-anchor</topology>
    </subcellularLocation>
    <subcellularLocation>
        <location evidence="2">Secreted</location>
    </subcellularLocation>
</comment>
<comment type="tissue specificity">
    <text>Expressed in the globlet and Paneth cells of the small intestine of infected mice. Expressed in the ileum of uninfected mice.</text>
</comment>
<comment type="induction">
    <text evidence="5 6 7">Up-regulated by infection with T.spiralis (at protein level). Also induced by infection with the helminth parasite N.brasiliensis.</text>
</comment>
<comment type="miscellaneous">
    <text>Constitutive expression does not lead to enhanced immunity to N.brasiliensis or M.tuberculosis.</text>
</comment>
<protein>
    <recommendedName>
        <fullName>Intelectin-1b</fullName>
    </recommendedName>
    <alternativeName>
        <fullName>Intelectin-2</fullName>
    </alternativeName>
</protein>